<protein>
    <recommendedName>
        <fullName evidence="1">N-acetylmuramic acid 6-phosphate etherase</fullName>
        <shortName evidence="1">MurNAc-6-P etherase</shortName>
        <ecNumber evidence="1">4.2.1.126</ecNumber>
    </recommendedName>
    <alternativeName>
        <fullName evidence="1">N-acetylmuramic acid 6-phosphate hydrolase</fullName>
    </alternativeName>
    <alternativeName>
        <fullName evidence="1">N-acetylmuramic acid 6-phosphate lyase</fullName>
    </alternativeName>
</protein>
<organism>
    <name type="scientific">Shigella dysenteriae serotype 1 (strain Sd197)</name>
    <dbReference type="NCBI Taxonomy" id="300267"/>
    <lineage>
        <taxon>Bacteria</taxon>
        <taxon>Pseudomonadati</taxon>
        <taxon>Pseudomonadota</taxon>
        <taxon>Gammaproteobacteria</taxon>
        <taxon>Enterobacterales</taxon>
        <taxon>Enterobacteriaceae</taxon>
        <taxon>Shigella</taxon>
    </lineage>
</organism>
<accession>Q32DC6</accession>
<comment type="function">
    <text evidence="1">Specifically catalyzes the cleavage of the D-lactyl ether substituent of MurNAc 6-phosphate, producing GlcNAc 6-phosphate and D-lactate. Together with AnmK, is also required for the utilization of anhydro-N-acetylmuramic acid (anhMurNAc) either imported from the medium or derived from its own cell wall murein, and thus plays a role in cell wall recycling.</text>
</comment>
<comment type="catalytic activity">
    <reaction evidence="1">
        <text>N-acetyl-D-muramate 6-phosphate + H2O = N-acetyl-D-glucosamine 6-phosphate + (R)-lactate</text>
        <dbReference type="Rhea" id="RHEA:26410"/>
        <dbReference type="ChEBI" id="CHEBI:15377"/>
        <dbReference type="ChEBI" id="CHEBI:16004"/>
        <dbReference type="ChEBI" id="CHEBI:57513"/>
        <dbReference type="ChEBI" id="CHEBI:58722"/>
        <dbReference type="EC" id="4.2.1.126"/>
    </reaction>
</comment>
<comment type="pathway">
    <text evidence="1">Amino-sugar metabolism; 1,6-anhydro-N-acetylmuramate degradation.</text>
</comment>
<comment type="pathway">
    <text evidence="1">Amino-sugar metabolism; N-acetylmuramate degradation.</text>
</comment>
<comment type="pathway">
    <text evidence="1">Cell wall biogenesis; peptidoglycan recycling.</text>
</comment>
<comment type="subunit">
    <text evidence="1">Homodimer.</text>
</comment>
<comment type="induction">
    <text evidence="1">Induced by MurNAc 6-phosphate that releases the repressor MurR from the DNA. Repressed by MurR in the absence of MurNAc 6-phosphate.</text>
</comment>
<comment type="miscellaneous">
    <text evidence="1">A lyase-type mechanism (elimination/hydration) is suggested for the cleavage of the lactyl ether bond of MurNAc 6-phosphate, with the formation of an alpha,beta-unsaturated aldehyde intermediate with (E)-stereochemistry, followed by the syn addition of water to give product.</text>
</comment>
<comment type="similarity">
    <text evidence="1">Belongs to the GCKR-like family. MurNAc-6-P etherase subfamily.</text>
</comment>
<reference key="1">
    <citation type="journal article" date="2005" name="Nucleic Acids Res.">
        <title>Genome dynamics and diversity of Shigella species, the etiologic agents of bacillary dysentery.</title>
        <authorList>
            <person name="Yang F."/>
            <person name="Yang J."/>
            <person name="Zhang X."/>
            <person name="Chen L."/>
            <person name="Jiang Y."/>
            <person name="Yan Y."/>
            <person name="Tang X."/>
            <person name="Wang J."/>
            <person name="Xiong Z."/>
            <person name="Dong J."/>
            <person name="Xue Y."/>
            <person name="Zhu Y."/>
            <person name="Xu X."/>
            <person name="Sun L."/>
            <person name="Chen S."/>
            <person name="Nie H."/>
            <person name="Peng J."/>
            <person name="Xu J."/>
            <person name="Wang Y."/>
            <person name="Yuan Z."/>
            <person name="Wen Y."/>
            <person name="Yao Z."/>
            <person name="Shen Y."/>
            <person name="Qiang B."/>
            <person name="Hou Y."/>
            <person name="Yu J."/>
            <person name="Jin Q."/>
        </authorList>
    </citation>
    <scope>NUCLEOTIDE SEQUENCE [LARGE SCALE GENOMIC DNA]</scope>
    <source>
        <strain>Sd197</strain>
    </source>
</reference>
<keyword id="KW-0119">Carbohydrate metabolism</keyword>
<keyword id="KW-0456">Lyase</keyword>
<keyword id="KW-1185">Reference proteome</keyword>
<feature type="chain" id="PRO_0000249651" description="N-acetylmuramic acid 6-phosphate etherase">
    <location>
        <begin position="1"/>
        <end position="298"/>
    </location>
</feature>
<feature type="domain" description="SIS" evidence="1">
    <location>
        <begin position="55"/>
        <end position="218"/>
    </location>
</feature>
<feature type="active site" description="Proton donor" evidence="1">
    <location>
        <position position="83"/>
    </location>
</feature>
<feature type="active site" evidence="1">
    <location>
        <position position="114"/>
    </location>
</feature>
<dbReference type="EC" id="4.2.1.126" evidence="1"/>
<dbReference type="EMBL" id="CP000034">
    <property type="protein sequence ID" value="ABB62679.1"/>
    <property type="molecule type" value="Genomic_DNA"/>
</dbReference>
<dbReference type="RefSeq" id="WP_001175604.1">
    <property type="nucleotide sequence ID" value="NC_007606.1"/>
</dbReference>
<dbReference type="RefSeq" id="YP_404170.1">
    <property type="nucleotide sequence ID" value="NC_007606.1"/>
</dbReference>
<dbReference type="SMR" id="Q32DC6"/>
<dbReference type="STRING" id="300267.SDY_2624"/>
<dbReference type="EnsemblBacteria" id="ABB62679">
    <property type="protein sequence ID" value="ABB62679"/>
    <property type="gene ID" value="SDY_2624"/>
</dbReference>
<dbReference type="KEGG" id="sdy:SDY_2624"/>
<dbReference type="PATRIC" id="fig|300267.13.peg.3161"/>
<dbReference type="HOGENOM" id="CLU_049049_1_1_6"/>
<dbReference type="UniPathway" id="UPA00342"/>
<dbReference type="UniPathway" id="UPA00343"/>
<dbReference type="UniPathway" id="UPA00544"/>
<dbReference type="Proteomes" id="UP000002716">
    <property type="component" value="Chromosome"/>
</dbReference>
<dbReference type="GO" id="GO:0097367">
    <property type="term" value="F:carbohydrate derivative binding"/>
    <property type="evidence" value="ECO:0007669"/>
    <property type="project" value="InterPro"/>
</dbReference>
<dbReference type="GO" id="GO:0016835">
    <property type="term" value="F:carbon-oxygen lyase activity"/>
    <property type="evidence" value="ECO:0007669"/>
    <property type="project" value="UniProtKB-UniRule"/>
</dbReference>
<dbReference type="GO" id="GO:0016803">
    <property type="term" value="F:ether hydrolase activity"/>
    <property type="evidence" value="ECO:0007669"/>
    <property type="project" value="TreeGrafter"/>
</dbReference>
<dbReference type="GO" id="GO:0097175">
    <property type="term" value="P:1,6-anhydro-N-acetyl-beta-muramic acid catabolic process"/>
    <property type="evidence" value="ECO:0007669"/>
    <property type="project" value="UniProtKB-UniRule"/>
</dbReference>
<dbReference type="GO" id="GO:0046348">
    <property type="term" value="P:amino sugar catabolic process"/>
    <property type="evidence" value="ECO:0007669"/>
    <property type="project" value="InterPro"/>
</dbReference>
<dbReference type="GO" id="GO:0097173">
    <property type="term" value="P:N-acetylmuramic acid catabolic process"/>
    <property type="evidence" value="ECO:0007669"/>
    <property type="project" value="UniProtKB-UniPathway"/>
</dbReference>
<dbReference type="GO" id="GO:0009254">
    <property type="term" value="P:peptidoglycan turnover"/>
    <property type="evidence" value="ECO:0007669"/>
    <property type="project" value="UniProtKB-UniRule"/>
</dbReference>
<dbReference type="CDD" id="cd05007">
    <property type="entry name" value="SIS_Etherase"/>
    <property type="match status" value="1"/>
</dbReference>
<dbReference type="FunFam" id="1.10.8.1080:FF:000001">
    <property type="entry name" value="N-acetylmuramic acid 6-phosphate etherase"/>
    <property type="match status" value="1"/>
</dbReference>
<dbReference type="FunFam" id="3.40.50.10490:FF:000014">
    <property type="entry name" value="N-acetylmuramic acid 6-phosphate etherase"/>
    <property type="match status" value="1"/>
</dbReference>
<dbReference type="Gene3D" id="1.10.8.1080">
    <property type="match status" value="1"/>
</dbReference>
<dbReference type="Gene3D" id="3.40.50.10490">
    <property type="entry name" value="Glucose-6-phosphate isomerase like protein, domain 1"/>
    <property type="match status" value="1"/>
</dbReference>
<dbReference type="HAMAP" id="MF_00068">
    <property type="entry name" value="MurQ"/>
    <property type="match status" value="1"/>
</dbReference>
<dbReference type="InterPro" id="IPR005488">
    <property type="entry name" value="Etherase_MurQ"/>
</dbReference>
<dbReference type="InterPro" id="IPR005486">
    <property type="entry name" value="Glucokinase_regulatory_CS"/>
</dbReference>
<dbReference type="InterPro" id="IPR040190">
    <property type="entry name" value="MURQ/GCKR"/>
</dbReference>
<dbReference type="InterPro" id="IPR001347">
    <property type="entry name" value="SIS_dom"/>
</dbReference>
<dbReference type="InterPro" id="IPR046348">
    <property type="entry name" value="SIS_dom_sf"/>
</dbReference>
<dbReference type="NCBIfam" id="TIGR00274">
    <property type="entry name" value="N-acetylmuramic acid 6-phosphate etherase"/>
    <property type="match status" value="1"/>
</dbReference>
<dbReference type="NCBIfam" id="NF003915">
    <property type="entry name" value="PRK05441.1"/>
    <property type="match status" value="1"/>
</dbReference>
<dbReference type="NCBIfam" id="NF009222">
    <property type="entry name" value="PRK12570.1"/>
    <property type="match status" value="1"/>
</dbReference>
<dbReference type="PANTHER" id="PTHR10088">
    <property type="entry name" value="GLUCOKINASE REGULATORY PROTEIN"/>
    <property type="match status" value="1"/>
</dbReference>
<dbReference type="PANTHER" id="PTHR10088:SF4">
    <property type="entry name" value="GLUCOKINASE REGULATORY PROTEIN"/>
    <property type="match status" value="1"/>
</dbReference>
<dbReference type="Pfam" id="PF22645">
    <property type="entry name" value="GKRP_SIS_N"/>
    <property type="match status" value="1"/>
</dbReference>
<dbReference type="SUPFAM" id="SSF53697">
    <property type="entry name" value="SIS domain"/>
    <property type="match status" value="1"/>
</dbReference>
<dbReference type="PROSITE" id="PS01272">
    <property type="entry name" value="GCKR"/>
    <property type="match status" value="1"/>
</dbReference>
<dbReference type="PROSITE" id="PS51464">
    <property type="entry name" value="SIS"/>
    <property type="match status" value="1"/>
</dbReference>
<evidence type="ECO:0000255" key="1">
    <source>
        <dbReference type="HAMAP-Rule" id="MF_00068"/>
    </source>
</evidence>
<proteinExistence type="inferred from homology"/>
<name>MURQ_SHIDS</name>
<sequence>MQLEKMITEGSNAASAEIDRVSTLEMCRIINDEDKTVPLAVERVLPDIAAAIDVIHAQVSGGGRLIYLGAGTSGRLGILDASECPPTYGVKPGLVVGLIAGGEYAIQHAVEGAEDSREGGINDLKNIGLTAQDVVVGIAASGRTPYVIAGLEYARQLGCRTVGISCNPGSAVSTTAEFAITPVVGAEVVTGSSRMKAGTAQKLVLNMLSTGLMIKSGKVFGNLMVDVVATNEKLHVRQVNIVKNATGCNAEQAEAALIACERNCKTAIVMVLKNLDAAEAKKRLDQHGGFIRQVLDKE</sequence>
<gene>
    <name evidence="1" type="primary">murQ</name>
    <name type="ordered locus">SDY_2624</name>
</gene>